<name>RNC_FRATT</name>
<evidence type="ECO:0000255" key="1">
    <source>
        <dbReference type="HAMAP-Rule" id="MF_00104"/>
    </source>
</evidence>
<accession>Q5NER3</accession>
<protein>
    <recommendedName>
        <fullName evidence="1">Ribonuclease 3</fullName>
        <ecNumber evidence="1">3.1.26.3</ecNumber>
    </recommendedName>
    <alternativeName>
        <fullName evidence="1">Ribonuclease III</fullName>
        <shortName evidence="1">RNase III</shortName>
    </alternativeName>
</protein>
<proteinExistence type="inferred from homology"/>
<keyword id="KW-0963">Cytoplasm</keyword>
<keyword id="KW-0255">Endonuclease</keyword>
<keyword id="KW-0378">Hydrolase</keyword>
<keyword id="KW-0460">Magnesium</keyword>
<keyword id="KW-0479">Metal-binding</keyword>
<keyword id="KW-0507">mRNA processing</keyword>
<keyword id="KW-0540">Nuclease</keyword>
<keyword id="KW-1185">Reference proteome</keyword>
<keyword id="KW-0694">RNA-binding</keyword>
<keyword id="KW-0698">rRNA processing</keyword>
<keyword id="KW-0699">rRNA-binding</keyword>
<keyword id="KW-0819">tRNA processing</keyword>
<comment type="function">
    <text evidence="1">Digests double-stranded RNA. Involved in the processing of primary rRNA transcript to yield the immediate precursors to the large and small rRNAs (23S and 16S). Processes some mRNAs, and tRNAs when they are encoded in the rRNA operon. Processes pre-crRNA and tracrRNA of type II CRISPR loci if present in the organism.</text>
</comment>
<comment type="catalytic activity">
    <reaction evidence="1">
        <text>Endonucleolytic cleavage to 5'-phosphomonoester.</text>
        <dbReference type="EC" id="3.1.26.3"/>
    </reaction>
</comment>
<comment type="cofactor">
    <cofactor evidence="1">
        <name>Mg(2+)</name>
        <dbReference type="ChEBI" id="CHEBI:18420"/>
    </cofactor>
</comment>
<comment type="subunit">
    <text evidence="1">Homodimer.</text>
</comment>
<comment type="subcellular location">
    <subcellularLocation>
        <location evidence="1">Cytoplasm</location>
    </subcellularLocation>
</comment>
<comment type="similarity">
    <text evidence="1">Belongs to the ribonuclease III family.</text>
</comment>
<reference key="1">
    <citation type="journal article" date="2005" name="Nat. Genet.">
        <title>The complete genome sequence of Francisella tularensis, the causative agent of tularemia.</title>
        <authorList>
            <person name="Larsson P."/>
            <person name="Oyston P.C.F."/>
            <person name="Chain P."/>
            <person name="Chu M.C."/>
            <person name="Duffield M."/>
            <person name="Fuxelius H.-H."/>
            <person name="Garcia E."/>
            <person name="Haelltorp G."/>
            <person name="Johansson D."/>
            <person name="Isherwood K.E."/>
            <person name="Karp P.D."/>
            <person name="Larsson E."/>
            <person name="Liu Y."/>
            <person name="Michell S."/>
            <person name="Prior J."/>
            <person name="Prior R."/>
            <person name="Malfatti S."/>
            <person name="Sjoestedt A."/>
            <person name="Svensson K."/>
            <person name="Thompson N."/>
            <person name="Vergez L."/>
            <person name="Wagg J.K."/>
            <person name="Wren B.W."/>
            <person name="Lindler L.E."/>
            <person name="Andersson S.G.E."/>
            <person name="Forsman M."/>
            <person name="Titball R.W."/>
        </authorList>
    </citation>
    <scope>NUCLEOTIDE SEQUENCE [LARGE SCALE GENOMIC DNA]</scope>
    <source>
        <strain>SCHU S4 / Schu 4</strain>
    </source>
</reference>
<feature type="chain" id="PRO_0000228532" description="Ribonuclease 3">
    <location>
        <begin position="1"/>
        <end position="230"/>
    </location>
</feature>
<feature type="domain" description="RNase III" evidence="1">
    <location>
        <begin position="5"/>
        <end position="125"/>
    </location>
</feature>
<feature type="domain" description="DRBM" evidence="1">
    <location>
        <begin position="153"/>
        <end position="223"/>
    </location>
</feature>
<feature type="active site" evidence="1">
    <location>
        <position position="44"/>
    </location>
</feature>
<feature type="active site" evidence="1">
    <location>
        <position position="114"/>
    </location>
</feature>
<feature type="binding site" evidence="1">
    <location>
        <position position="40"/>
    </location>
    <ligand>
        <name>Mg(2+)</name>
        <dbReference type="ChEBI" id="CHEBI:18420"/>
    </ligand>
</feature>
<feature type="binding site" evidence="1">
    <location>
        <position position="111"/>
    </location>
    <ligand>
        <name>Mg(2+)</name>
        <dbReference type="ChEBI" id="CHEBI:18420"/>
    </ligand>
</feature>
<feature type="binding site" evidence="1">
    <location>
        <position position="114"/>
    </location>
    <ligand>
        <name>Mg(2+)</name>
        <dbReference type="ChEBI" id="CHEBI:18420"/>
    </ligand>
</feature>
<sequence>MVPEYSRFYNILGYNFKDYTLLIRALTHRSKTKKNYERLEFLGDSVLSFVIAEVLYKQFIDLAEGKLSQLRSKLVKGATLAQLASSLKMDEYIILGASEQGGHKREKILEDVFEAVIGAIYLDSDFATVKKVILKWYQPIISSINLDTIKVKDSKSKLQEILLQNALSLPEYSIETIDGKDHEQQFTVVAVSKDLNLRVKAQGTSRKKAEQKTAEKMIEMLSQQGLHEKK</sequence>
<dbReference type="EC" id="3.1.26.3" evidence="1"/>
<dbReference type="EMBL" id="AJ749949">
    <property type="protein sequence ID" value="CAG46188.1"/>
    <property type="molecule type" value="Genomic_DNA"/>
</dbReference>
<dbReference type="RefSeq" id="WP_003022451.1">
    <property type="nucleotide sequence ID" value="NC_006570.2"/>
</dbReference>
<dbReference type="RefSeq" id="YP_170479.1">
    <property type="nucleotide sequence ID" value="NC_006570.2"/>
</dbReference>
<dbReference type="SMR" id="Q5NER3"/>
<dbReference type="STRING" id="177416.FTT_1555c"/>
<dbReference type="DNASU" id="3191612"/>
<dbReference type="EnsemblBacteria" id="CAG46188">
    <property type="protein sequence ID" value="CAG46188"/>
    <property type="gene ID" value="FTT_1555c"/>
</dbReference>
<dbReference type="KEGG" id="ftu:FTT_1555c"/>
<dbReference type="eggNOG" id="COG0571">
    <property type="taxonomic scope" value="Bacteria"/>
</dbReference>
<dbReference type="OrthoDB" id="9805026at2"/>
<dbReference type="Proteomes" id="UP000001174">
    <property type="component" value="Chromosome"/>
</dbReference>
<dbReference type="GO" id="GO:0005737">
    <property type="term" value="C:cytoplasm"/>
    <property type="evidence" value="ECO:0007669"/>
    <property type="project" value="UniProtKB-SubCell"/>
</dbReference>
<dbReference type="GO" id="GO:0003725">
    <property type="term" value="F:double-stranded RNA binding"/>
    <property type="evidence" value="ECO:0007669"/>
    <property type="project" value="TreeGrafter"/>
</dbReference>
<dbReference type="GO" id="GO:0046872">
    <property type="term" value="F:metal ion binding"/>
    <property type="evidence" value="ECO:0007669"/>
    <property type="project" value="UniProtKB-KW"/>
</dbReference>
<dbReference type="GO" id="GO:0004525">
    <property type="term" value="F:ribonuclease III activity"/>
    <property type="evidence" value="ECO:0007669"/>
    <property type="project" value="UniProtKB-UniRule"/>
</dbReference>
<dbReference type="GO" id="GO:0019843">
    <property type="term" value="F:rRNA binding"/>
    <property type="evidence" value="ECO:0007669"/>
    <property type="project" value="UniProtKB-KW"/>
</dbReference>
<dbReference type="GO" id="GO:0006397">
    <property type="term" value="P:mRNA processing"/>
    <property type="evidence" value="ECO:0007669"/>
    <property type="project" value="UniProtKB-UniRule"/>
</dbReference>
<dbReference type="GO" id="GO:0010468">
    <property type="term" value="P:regulation of gene expression"/>
    <property type="evidence" value="ECO:0007669"/>
    <property type="project" value="TreeGrafter"/>
</dbReference>
<dbReference type="GO" id="GO:0006364">
    <property type="term" value="P:rRNA processing"/>
    <property type="evidence" value="ECO:0007669"/>
    <property type="project" value="UniProtKB-UniRule"/>
</dbReference>
<dbReference type="GO" id="GO:0008033">
    <property type="term" value="P:tRNA processing"/>
    <property type="evidence" value="ECO:0007669"/>
    <property type="project" value="UniProtKB-KW"/>
</dbReference>
<dbReference type="CDD" id="cd10845">
    <property type="entry name" value="DSRM_RNAse_III_family"/>
    <property type="match status" value="1"/>
</dbReference>
<dbReference type="CDD" id="cd00593">
    <property type="entry name" value="RIBOc"/>
    <property type="match status" value="1"/>
</dbReference>
<dbReference type="FunFam" id="1.10.1520.10:FF:000001">
    <property type="entry name" value="Ribonuclease 3"/>
    <property type="match status" value="1"/>
</dbReference>
<dbReference type="Gene3D" id="3.30.160.20">
    <property type="match status" value="1"/>
</dbReference>
<dbReference type="Gene3D" id="1.10.1520.10">
    <property type="entry name" value="Ribonuclease III domain"/>
    <property type="match status" value="1"/>
</dbReference>
<dbReference type="HAMAP" id="MF_00104">
    <property type="entry name" value="RNase_III"/>
    <property type="match status" value="1"/>
</dbReference>
<dbReference type="InterPro" id="IPR014720">
    <property type="entry name" value="dsRBD_dom"/>
</dbReference>
<dbReference type="InterPro" id="IPR011907">
    <property type="entry name" value="RNase_III"/>
</dbReference>
<dbReference type="InterPro" id="IPR000999">
    <property type="entry name" value="RNase_III_dom"/>
</dbReference>
<dbReference type="InterPro" id="IPR036389">
    <property type="entry name" value="RNase_III_sf"/>
</dbReference>
<dbReference type="NCBIfam" id="TIGR02191">
    <property type="entry name" value="RNaseIII"/>
    <property type="match status" value="1"/>
</dbReference>
<dbReference type="PANTHER" id="PTHR11207:SF0">
    <property type="entry name" value="RIBONUCLEASE 3"/>
    <property type="match status" value="1"/>
</dbReference>
<dbReference type="PANTHER" id="PTHR11207">
    <property type="entry name" value="RIBONUCLEASE III"/>
    <property type="match status" value="1"/>
</dbReference>
<dbReference type="Pfam" id="PF00035">
    <property type="entry name" value="dsrm"/>
    <property type="match status" value="1"/>
</dbReference>
<dbReference type="Pfam" id="PF14622">
    <property type="entry name" value="Ribonucleas_3_3"/>
    <property type="match status" value="1"/>
</dbReference>
<dbReference type="SMART" id="SM00358">
    <property type="entry name" value="DSRM"/>
    <property type="match status" value="1"/>
</dbReference>
<dbReference type="SMART" id="SM00535">
    <property type="entry name" value="RIBOc"/>
    <property type="match status" value="1"/>
</dbReference>
<dbReference type="SUPFAM" id="SSF54768">
    <property type="entry name" value="dsRNA-binding domain-like"/>
    <property type="match status" value="1"/>
</dbReference>
<dbReference type="SUPFAM" id="SSF69065">
    <property type="entry name" value="RNase III domain-like"/>
    <property type="match status" value="1"/>
</dbReference>
<dbReference type="PROSITE" id="PS50137">
    <property type="entry name" value="DS_RBD"/>
    <property type="match status" value="1"/>
</dbReference>
<dbReference type="PROSITE" id="PS00517">
    <property type="entry name" value="RNASE_3_1"/>
    <property type="match status" value="1"/>
</dbReference>
<dbReference type="PROSITE" id="PS50142">
    <property type="entry name" value="RNASE_3_2"/>
    <property type="match status" value="1"/>
</dbReference>
<gene>
    <name evidence="1" type="primary">rnc</name>
    <name type="ordered locus">FTT_1555c</name>
</gene>
<organism>
    <name type="scientific">Francisella tularensis subsp. tularensis (strain SCHU S4 / Schu 4)</name>
    <dbReference type="NCBI Taxonomy" id="177416"/>
    <lineage>
        <taxon>Bacteria</taxon>
        <taxon>Pseudomonadati</taxon>
        <taxon>Pseudomonadota</taxon>
        <taxon>Gammaproteobacteria</taxon>
        <taxon>Thiotrichales</taxon>
        <taxon>Francisellaceae</taxon>
        <taxon>Francisella</taxon>
    </lineage>
</organism>